<reference key="1">
    <citation type="journal article" date="2002" name="J. Bacteriol.">
        <title>Genome sequence and analysis of the oral bacterium Fusobacterium nucleatum strain ATCC 25586.</title>
        <authorList>
            <person name="Kapatral V."/>
            <person name="Anderson I."/>
            <person name="Ivanova N."/>
            <person name="Reznik G."/>
            <person name="Los T."/>
            <person name="Lykidis A."/>
            <person name="Bhattacharyya A."/>
            <person name="Bartman A."/>
            <person name="Gardner W."/>
            <person name="Grechkin G."/>
            <person name="Zhu L."/>
            <person name="Vasieva O."/>
            <person name="Chu L."/>
            <person name="Kogan Y."/>
            <person name="Chaga O."/>
            <person name="Goltsman E."/>
            <person name="Bernal A."/>
            <person name="Larsen N."/>
            <person name="D'Souza M."/>
            <person name="Walunas T."/>
            <person name="Pusch G."/>
            <person name="Haselkorn R."/>
            <person name="Fonstein M."/>
            <person name="Kyrpides N.C."/>
            <person name="Overbeek R."/>
        </authorList>
    </citation>
    <scope>NUCLEOTIDE SEQUENCE [LARGE SCALE GENOMIC DNA]</scope>
    <source>
        <strain>ATCC 25586 / DSM 15643 / BCRC 10681 / CIP 101130 / JCM 8532 / KCTC 2640 / LMG 13131 / VPI 4355</strain>
    </source>
</reference>
<organism>
    <name type="scientific">Fusobacterium nucleatum subsp. nucleatum (strain ATCC 25586 / DSM 15643 / BCRC 10681 / CIP 101130 / JCM 8532 / KCTC 2640 / LMG 13131 / VPI 4355)</name>
    <dbReference type="NCBI Taxonomy" id="190304"/>
    <lineage>
        <taxon>Bacteria</taxon>
        <taxon>Fusobacteriati</taxon>
        <taxon>Fusobacteriota</taxon>
        <taxon>Fusobacteriia</taxon>
        <taxon>Fusobacteriales</taxon>
        <taxon>Fusobacteriaceae</taxon>
        <taxon>Fusobacterium</taxon>
    </lineage>
</organism>
<feature type="chain" id="PRO_0000157014" description="Thiamine-phosphate synthase">
    <location>
        <begin position="1"/>
        <end position="206"/>
    </location>
</feature>
<feature type="binding site" evidence="1">
    <location>
        <begin position="38"/>
        <end position="42"/>
    </location>
    <ligand>
        <name>4-amino-2-methyl-5-(diphosphooxymethyl)pyrimidine</name>
        <dbReference type="ChEBI" id="CHEBI:57841"/>
    </ligand>
</feature>
<feature type="binding site" evidence="1">
    <location>
        <position position="70"/>
    </location>
    <ligand>
        <name>4-amino-2-methyl-5-(diphosphooxymethyl)pyrimidine</name>
        <dbReference type="ChEBI" id="CHEBI:57841"/>
    </ligand>
</feature>
<feature type="binding site" evidence="1">
    <location>
        <position position="71"/>
    </location>
    <ligand>
        <name>Mg(2+)</name>
        <dbReference type="ChEBI" id="CHEBI:18420"/>
    </ligand>
</feature>
<feature type="binding site" evidence="1">
    <location>
        <position position="90"/>
    </location>
    <ligand>
        <name>Mg(2+)</name>
        <dbReference type="ChEBI" id="CHEBI:18420"/>
    </ligand>
</feature>
<feature type="binding site" evidence="1">
    <location>
        <position position="109"/>
    </location>
    <ligand>
        <name>4-amino-2-methyl-5-(diphosphooxymethyl)pyrimidine</name>
        <dbReference type="ChEBI" id="CHEBI:57841"/>
    </ligand>
</feature>
<feature type="binding site" evidence="1">
    <location>
        <begin position="135"/>
        <end position="137"/>
    </location>
    <ligand>
        <name>2-[(2R,5Z)-2-carboxy-4-methylthiazol-5(2H)-ylidene]ethyl phosphate</name>
        <dbReference type="ChEBI" id="CHEBI:62899"/>
    </ligand>
</feature>
<feature type="binding site" evidence="1">
    <location>
        <position position="138"/>
    </location>
    <ligand>
        <name>4-amino-2-methyl-5-(diphosphooxymethyl)pyrimidine</name>
        <dbReference type="ChEBI" id="CHEBI:57841"/>
    </ligand>
</feature>
<feature type="binding site" evidence="1">
    <location>
        <position position="165"/>
    </location>
    <ligand>
        <name>2-[(2R,5Z)-2-carboxy-4-methylthiazol-5(2H)-ylidene]ethyl phosphate</name>
        <dbReference type="ChEBI" id="CHEBI:62899"/>
    </ligand>
</feature>
<feature type="binding site" evidence="1">
    <location>
        <begin position="185"/>
        <end position="186"/>
    </location>
    <ligand>
        <name>2-[(2R,5Z)-2-carboxy-4-methylthiazol-5(2H)-ylidene]ethyl phosphate</name>
        <dbReference type="ChEBI" id="CHEBI:62899"/>
    </ligand>
</feature>
<accession>Q8RI59</accession>
<keyword id="KW-0460">Magnesium</keyword>
<keyword id="KW-0479">Metal-binding</keyword>
<keyword id="KW-1185">Reference proteome</keyword>
<keyword id="KW-0784">Thiamine biosynthesis</keyword>
<keyword id="KW-0808">Transferase</keyword>
<evidence type="ECO:0000255" key="1">
    <source>
        <dbReference type="HAMAP-Rule" id="MF_00097"/>
    </source>
</evidence>
<sequence length="206" mass="22966">MDLKDCKIYLVTDEKACNGKDFYKCIEESIKGGVKIVQLREKNISTKDFYKKALKVKEICKNYEVLFIINDRLDITQAVEADGVHLGQSDMPIEKAREILKDKFLIGATARNIEEAEKAQLLGADYIGSGAIFGTSTKDNAKRLEMEDLKKIVNSVKIPVFAIGGININNVWMLKNIGLQGVCSVSGILSEKDCKKAVENILKNFN</sequence>
<dbReference type="EC" id="2.5.1.3" evidence="1"/>
<dbReference type="EMBL" id="AE009951">
    <property type="protein sequence ID" value="AAL93873.1"/>
    <property type="molecule type" value="Genomic_DNA"/>
</dbReference>
<dbReference type="RefSeq" id="NP_602574.1">
    <property type="nucleotide sequence ID" value="NC_003454.1"/>
</dbReference>
<dbReference type="RefSeq" id="WP_005904284.1">
    <property type="nucleotide sequence ID" value="NZ_OZ209243.1"/>
</dbReference>
<dbReference type="SMR" id="Q8RI59"/>
<dbReference type="FunCoup" id="Q8RI59">
    <property type="interactions" value="264"/>
</dbReference>
<dbReference type="STRING" id="190304.FN1758"/>
<dbReference type="PaxDb" id="190304-FN1758"/>
<dbReference type="EnsemblBacteria" id="AAL93873">
    <property type="protein sequence ID" value="AAL93873"/>
    <property type="gene ID" value="FN1758"/>
</dbReference>
<dbReference type="GeneID" id="79782686"/>
<dbReference type="KEGG" id="fnu:FN1758"/>
<dbReference type="PATRIC" id="fig|190304.8.peg.248"/>
<dbReference type="eggNOG" id="COG0352">
    <property type="taxonomic scope" value="Bacteria"/>
</dbReference>
<dbReference type="HOGENOM" id="CLU_018272_3_2_0"/>
<dbReference type="InParanoid" id="Q8RI59"/>
<dbReference type="BioCyc" id="FNUC190304:G1FZS-256-MONOMER"/>
<dbReference type="UniPathway" id="UPA00060">
    <property type="reaction ID" value="UER00141"/>
</dbReference>
<dbReference type="Proteomes" id="UP000002521">
    <property type="component" value="Chromosome"/>
</dbReference>
<dbReference type="GO" id="GO:0005737">
    <property type="term" value="C:cytoplasm"/>
    <property type="evidence" value="ECO:0000318"/>
    <property type="project" value="GO_Central"/>
</dbReference>
<dbReference type="GO" id="GO:0000287">
    <property type="term" value="F:magnesium ion binding"/>
    <property type="evidence" value="ECO:0007669"/>
    <property type="project" value="UniProtKB-UniRule"/>
</dbReference>
<dbReference type="GO" id="GO:0004789">
    <property type="term" value="F:thiamine-phosphate diphosphorylase activity"/>
    <property type="evidence" value="ECO:0000318"/>
    <property type="project" value="GO_Central"/>
</dbReference>
<dbReference type="GO" id="GO:0009228">
    <property type="term" value="P:thiamine biosynthetic process"/>
    <property type="evidence" value="ECO:0000318"/>
    <property type="project" value="GO_Central"/>
</dbReference>
<dbReference type="GO" id="GO:0009229">
    <property type="term" value="P:thiamine diphosphate biosynthetic process"/>
    <property type="evidence" value="ECO:0007669"/>
    <property type="project" value="UniProtKB-UniRule"/>
</dbReference>
<dbReference type="CDD" id="cd00564">
    <property type="entry name" value="TMP_TenI"/>
    <property type="match status" value="1"/>
</dbReference>
<dbReference type="FunFam" id="3.20.20.70:FF:000448">
    <property type="entry name" value="Thiamine-phosphate synthase"/>
    <property type="match status" value="1"/>
</dbReference>
<dbReference type="Gene3D" id="3.20.20.70">
    <property type="entry name" value="Aldolase class I"/>
    <property type="match status" value="1"/>
</dbReference>
<dbReference type="HAMAP" id="MF_00097">
    <property type="entry name" value="TMP_synthase"/>
    <property type="match status" value="1"/>
</dbReference>
<dbReference type="InterPro" id="IPR013785">
    <property type="entry name" value="Aldolase_TIM"/>
</dbReference>
<dbReference type="InterPro" id="IPR036206">
    <property type="entry name" value="ThiamineP_synth_sf"/>
</dbReference>
<dbReference type="InterPro" id="IPR022998">
    <property type="entry name" value="ThiamineP_synth_TenI"/>
</dbReference>
<dbReference type="InterPro" id="IPR034291">
    <property type="entry name" value="TMP_synthase"/>
</dbReference>
<dbReference type="NCBIfam" id="TIGR00693">
    <property type="entry name" value="thiE"/>
    <property type="match status" value="1"/>
</dbReference>
<dbReference type="PANTHER" id="PTHR20857:SF23">
    <property type="entry name" value="THIAMINE BIOSYNTHETIC BIFUNCTIONAL ENZYME"/>
    <property type="match status" value="1"/>
</dbReference>
<dbReference type="PANTHER" id="PTHR20857">
    <property type="entry name" value="THIAMINE-PHOSPHATE PYROPHOSPHORYLASE"/>
    <property type="match status" value="1"/>
</dbReference>
<dbReference type="Pfam" id="PF02581">
    <property type="entry name" value="TMP-TENI"/>
    <property type="match status" value="1"/>
</dbReference>
<dbReference type="SUPFAM" id="SSF51391">
    <property type="entry name" value="Thiamin phosphate synthase"/>
    <property type="match status" value="1"/>
</dbReference>
<name>THIE_FUSNN</name>
<protein>
    <recommendedName>
        <fullName evidence="1">Thiamine-phosphate synthase</fullName>
        <shortName evidence="1">TP synthase</shortName>
        <shortName evidence="1">TPS</shortName>
        <ecNumber evidence="1">2.5.1.3</ecNumber>
    </recommendedName>
    <alternativeName>
        <fullName evidence="1">Thiamine-phosphate pyrophosphorylase</fullName>
        <shortName evidence="1">TMP pyrophosphorylase</shortName>
        <shortName evidence="1">TMP-PPase</shortName>
    </alternativeName>
</protein>
<gene>
    <name evidence="1" type="primary">thiE</name>
    <name type="ordered locus">FN1758</name>
</gene>
<comment type="function">
    <text evidence="1">Condenses 4-methyl-5-(beta-hydroxyethyl)thiazole monophosphate (THZ-P) and 2-methyl-4-amino-5-hydroxymethyl pyrimidine pyrophosphate (HMP-PP) to form thiamine monophosphate (TMP).</text>
</comment>
<comment type="catalytic activity">
    <reaction evidence="1">
        <text>2-[(2R,5Z)-2-carboxy-4-methylthiazol-5(2H)-ylidene]ethyl phosphate + 4-amino-2-methyl-5-(diphosphooxymethyl)pyrimidine + 2 H(+) = thiamine phosphate + CO2 + diphosphate</text>
        <dbReference type="Rhea" id="RHEA:47844"/>
        <dbReference type="ChEBI" id="CHEBI:15378"/>
        <dbReference type="ChEBI" id="CHEBI:16526"/>
        <dbReference type="ChEBI" id="CHEBI:33019"/>
        <dbReference type="ChEBI" id="CHEBI:37575"/>
        <dbReference type="ChEBI" id="CHEBI:57841"/>
        <dbReference type="ChEBI" id="CHEBI:62899"/>
        <dbReference type="EC" id="2.5.1.3"/>
    </reaction>
</comment>
<comment type="catalytic activity">
    <reaction evidence="1">
        <text>2-(2-carboxy-4-methylthiazol-5-yl)ethyl phosphate + 4-amino-2-methyl-5-(diphosphooxymethyl)pyrimidine + 2 H(+) = thiamine phosphate + CO2 + diphosphate</text>
        <dbReference type="Rhea" id="RHEA:47848"/>
        <dbReference type="ChEBI" id="CHEBI:15378"/>
        <dbReference type="ChEBI" id="CHEBI:16526"/>
        <dbReference type="ChEBI" id="CHEBI:33019"/>
        <dbReference type="ChEBI" id="CHEBI:37575"/>
        <dbReference type="ChEBI" id="CHEBI:57841"/>
        <dbReference type="ChEBI" id="CHEBI:62890"/>
        <dbReference type="EC" id="2.5.1.3"/>
    </reaction>
</comment>
<comment type="catalytic activity">
    <reaction evidence="1">
        <text>4-methyl-5-(2-phosphooxyethyl)-thiazole + 4-amino-2-methyl-5-(diphosphooxymethyl)pyrimidine + H(+) = thiamine phosphate + diphosphate</text>
        <dbReference type="Rhea" id="RHEA:22328"/>
        <dbReference type="ChEBI" id="CHEBI:15378"/>
        <dbReference type="ChEBI" id="CHEBI:33019"/>
        <dbReference type="ChEBI" id="CHEBI:37575"/>
        <dbReference type="ChEBI" id="CHEBI:57841"/>
        <dbReference type="ChEBI" id="CHEBI:58296"/>
        <dbReference type="EC" id="2.5.1.3"/>
    </reaction>
</comment>
<comment type="cofactor">
    <cofactor evidence="1">
        <name>Mg(2+)</name>
        <dbReference type="ChEBI" id="CHEBI:18420"/>
    </cofactor>
    <text evidence="1">Binds 1 Mg(2+) ion per subunit.</text>
</comment>
<comment type="pathway">
    <text evidence="1">Cofactor biosynthesis; thiamine diphosphate biosynthesis; thiamine phosphate from 4-amino-2-methyl-5-diphosphomethylpyrimidine and 4-methyl-5-(2-phosphoethyl)-thiazole: step 1/1.</text>
</comment>
<comment type="similarity">
    <text evidence="1">Belongs to the thiamine-phosphate synthase family.</text>
</comment>
<proteinExistence type="inferred from homology"/>